<comment type="function">
    <text evidence="1">Involved in determining the orientation of cell expansion, probably by playing an important role in cellulose deposition. May act by recruiting cellulose synthesizing complexes to discrete positions on the cell surface (By similarity).</text>
</comment>
<comment type="subcellular location">
    <subcellularLocation>
        <location evidence="3">Cell membrane</location>
        <topology evidence="3">Lipid-anchor</topology>
        <topology evidence="3">GPI-anchor</topology>
    </subcellularLocation>
</comment>
<comment type="similarity">
    <text evidence="3">Belongs to the COBRA family.</text>
</comment>
<reference key="1">
    <citation type="journal article" date="2005" name="Mol. Genet. Genomics">
        <title>A fine physical map of the rice chromosome 5.</title>
        <authorList>
            <person name="Cheng C.-H."/>
            <person name="Chung M.C."/>
            <person name="Liu S.-M."/>
            <person name="Chen S.-K."/>
            <person name="Kao F.Y."/>
            <person name="Lin S.-J."/>
            <person name="Hsiao S.-H."/>
            <person name="Tseng I.C."/>
            <person name="Hsing Y.-I.C."/>
            <person name="Wu H.-P."/>
            <person name="Chen C.-S."/>
            <person name="Shaw J.-F."/>
            <person name="Wu J."/>
            <person name="Matsumoto T."/>
            <person name="Sasaki T."/>
            <person name="Chen H.-C."/>
            <person name="Chow T.-Y."/>
        </authorList>
    </citation>
    <scope>NUCLEOTIDE SEQUENCE [LARGE SCALE GENOMIC DNA]</scope>
    <source>
        <strain>cv. Nipponbare</strain>
    </source>
</reference>
<reference key="2">
    <citation type="journal article" date="2005" name="Nature">
        <title>The map-based sequence of the rice genome.</title>
        <authorList>
            <consortium name="International rice genome sequencing project (IRGSP)"/>
        </authorList>
    </citation>
    <scope>NUCLEOTIDE SEQUENCE [LARGE SCALE GENOMIC DNA]</scope>
    <source>
        <strain>cv. Nipponbare</strain>
    </source>
</reference>
<reference key="3">
    <citation type="journal article" date="2008" name="Nucleic Acids Res.">
        <title>The rice annotation project database (RAP-DB): 2008 update.</title>
        <authorList>
            <consortium name="The rice annotation project (RAP)"/>
        </authorList>
    </citation>
    <scope>GENOME REANNOTATION</scope>
    <source>
        <strain>cv. Nipponbare</strain>
    </source>
</reference>
<reference key="4">
    <citation type="journal article" date="2013" name="Rice">
        <title>Improvement of the Oryza sativa Nipponbare reference genome using next generation sequence and optical map data.</title>
        <authorList>
            <person name="Kawahara Y."/>
            <person name="de la Bastide M."/>
            <person name="Hamilton J.P."/>
            <person name="Kanamori H."/>
            <person name="McCombie W.R."/>
            <person name="Ouyang S."/>
            <person name="Schwartz D.C."/>
            <person name="Tanaka T."/>
            <person name="Wu J."/>
            <person name="Zhou S."/>
            <person name="Childs K.L."/>
            <person name="Davidson R.M."/>
            <person name="Lin H."/>
            <person name="Quesada-Ocampo L."/>
            <person name="Vaillancourt B."/>
            <person name="Sakai H."/>
            <person name="Lee S.S."/>
            <person name="Kim J."/>
            <person name="Numa H."/>
            <person name="Itoh T."/>
            <person name="Buell C.R."/>
            <person name="Matsumoto T."/>
        </authorList>
    </citation>
    <scope>GENOME REANNOTATION</scope>
    <source>
        <strain>cv. Nipponbare</strain>
    </source>
</reference>
<reference key="5">
    <citation type="journal article" date="2003" name="Science">
        <title>Collection, mapping, and annotation of over 28,000 cDNA clones from japonica rice.</title>
        <authorList>
            <consortium name="The rice full-length cDNA consortium"/>
        </authorList>
    </citation>
    <scope>NUCLEOTIDE SEQUENCE [LARGE SCALE MRNA]</scope>
    <source>
        <strain>cv. Nipponbare</strain>
    </source>
</reference>
<reference key="6">
    <citation type="journal article" date="2003" name="Plant Cell">
        <title>BRITTLE CULM1, which encodes a COBRA-like protein, affects the mechanical properties of rice plants.</title>
        <authorList>
            <person name="Li Y."/>
            <person name="Qian Q."/>
            <person name="Zhou Y."/>
            <person name="Yan M."/>
            <person name="Sun L."/>
            <person name="Zhang M."/>
            <person name="Fu Z."/>
            <person name="Wang Y."/>
            <person name="Han B."/>
            <person name="Pang X."/>
            <person name="Chen M."/>
            <person name="Li J."/>
        </authorList>
    </citation>
    <scope>IDENTIFICATION</scope>
    <scope>NOMENCLATURE</scope>
</reference>
<gene>
    <name type="primary">BC1L4</name>
    <name type="ordered locus">Os05g0386800</name>
    <name type="ordered locus">LOC_Os05g32110</name>
    <name type="ORF">OSJNBa0073E05.6</name>
</gene>
<organism>
    <name type="scientific">Oryza sativa subsp. japonica</name>
    <name type="common">Rice</name>
    <dbReference type="NCBI Taxonomy" id="39947"/>
    <lineage>
        <taxon>Eukaryota</taxon>
        <taxon>Viridiplantae</taxon>
        <taxon>Streptophyta</taxon>
        <taxon>Embryophyta</taxon>
        <taxon>Tracheophyta</taxon>
        <taxon>Spermatophyta</taxon>
        <taxon>Magnoliopsida</taxon>
        <taxon>Liliopsida</taxon>
        <taxon>Poales</taxon>
        <taxon>Poaceae</taxon>
        <taxon>BOP clade</taxon>
        <taxon>Oryzoideae</taxon>
        <taxon>Oryzeae</taxon>
        <taxon>Oryzinae</taxon>
        <taxon>Oryza</taxon>
        <taxon>Oryza sativa</taxon>
    </lineage>
</organism>
<sequence>MAVGGAGSSRSVAPCCCCAVLLAAALLFSAPATTEAYDALDPNGNITIKWDVMSWTPDGYVAVVTMFNYQQFRHIQAPGWQLGWTWAKKEVIWSMVGAQTTEQGDCSKFKGGTPHCCKKDPTVVDLLPGTPYNMQIANCCKAGVINTFNQDPSNAASSFQISVGLAGTTNKTVKLPKNFTLKAPGPGYTCGRAMIVRPTKFFTGDGRRATQALMTWNVTCTYSQFLAQKTPSCCVSLSSFYNDTIVNCPTCSCGCQNNGTSPGSCVNENSPYLQSAIDGPGKWTGQPLVQCTSHMCPIRIHWHVKLNYKEYWRVKITITNFNYRMNYTQWNLVAQHPNFNNITQLFSFNYKPLTPYGSKINDTAMFWGVKFYNDLLMQAGPLGNAQSELLLRKDSKDFTFDKGWAFPHRVYFNGDNCVMPPPDAYPWLPNASPLTKQPLTLSVLVFSIVLATLLAYA</sequence>
<name>COBL3_ORYSJ</name>
<evidence type="ECO:0000250" key="1"/>
<evidence type="ECO:0000255" key="2"/>
<evidence type="ECO:0000305" key="3"/>
<protein>
    <recommendedName>
        <fullName>COBRA-like protein 3</fullName>
    </recommendedName>
    <alternativeName>
        <fullName>Protein BRITTLE CULM1-like 4</fullName>
    </alternativeName>
</protein>
<accession>Q60E70</accession>
<accession>Q0DIJ0</accession>
<dbReference type="EMBL" id="AC136219">
    <property type="protein sequence ID" value="AAV31332.1"/>
    <property type="molecule type" value="Genomic_DNA"/>
</dbReference>
<dbReference type="EMBL" id="AP008211">
    <property type="protein sequence ID" value="BAF17333.1"/>
    <property type="molecule type" value="Genomic_DNA"/>
</dbReference>
<dbReference type="EMBL" id="AP014961">
    <property type="protein sequence ID" value="BAS93810.1"/>
    <property type="molecule type" value="Genomic_DNA"/>
</dbReference>
<dbReference type="EMBL" id="AK060897">
    <property type="protein sequence ID" value="BAG87603.1"/>
    <property type="molecule type" value="mRNA"/>
</dbReference>
<dbReference type="EMBL" id="AK070472">
    <property type="status" value="NOT_ANNOTATED_CDS"/>
    <property type="molecule type" value="mRNA"/>
</dbReference>
<dbReference type="FunCoup" id="Q60E70">
    <property type="interactions" value="11"/>
</dbReference>
<dbReference type="STRING" id="39947.Q60E70"/>
<dbReference type="GlyCosmos" id="Q60E70">
    <property type="glycosylation" value="9 sites, No reported glycans"/>
</dbReference>
<dbReference type="PaxDb" id="39947-Q60E70"/>
<dbReference type="EnsemblPlants" id="Os05t0386800-01">
    <property type="protein sequence ID" value="Os05t0386800-01"/>
    <property type="gene ID" value="Os05g0386800"/>
</dbReference>
<dbReference type="EnsemblPlants" id="Os05t0386800-02">
    <property type="protein sequence ID" value="Os05t0386800-02"/>
    <property type="gene ID" value="Os05g0386800"/>
</dbReference>
<dbReference type="Gramene" id="Os05t0386800-01">
    <property type="protein sequence ID" value="Os05t0386800-01"/>
    <property type="gene ID" value="Os05g0386800"/>
</dbReference>
<dbReference type="Gramene" id="Os05t0386800-02">
    <property type="protein sequence ID" value="Os05t0386800-02"/>
    <property type="gene ID" value="Os05g0386800"/>
</dbReference>
<dbReference type="KEGG" id="dosa:Os05g0386800"/>
<dbReference type="eggNOG" id="ENOG502QTGW">
    <property type="taxonomic scope" value="Eukaryota"/>
</dbReference>
<dbReference type="HOGENOM" id="CLU_038120_0_0_1"/>
<dbReference type="InParanoid" id="Q60E70"/>
<dbReference type="OMA" id="DIHRPIG"/>
<dbReference type="Proteomes" id="UP000000763">
    <property type="component" value="Chromosome 5"/>
</dbReference>
<dbReference type="Proteomes" id="UP000059680">
    <property type="component" value="Chromosome 5"/>
</dbReference>
<dbReference type="ExpressionAtlas" id="Q60E70">
    <property type="expression patterns" value="baseline and differential"/>
</dbReference>
<dbReference type="GO" id="GO:0005886">
    <property type="term" value="C:plasma membrane"/>
    <property type="evidence" value="ECO:0000318"/>
    <property type="project" value="GO_Central"/>
</dbReference>
<dbReference type="GO" id="GO:0098552">
    <property type="term" value="C:side of membrane"/>
    <property type="evidence" value="ECO:0007669"/>
    <property type="project" value="UniProtKB-KW"/>
</dbReference>
<dbReference type="GO" id="GO:0010215">
    <property type="term" value="P:cellulose microfibril organization"/>
    <property type="evidence" value="ECO:0007669"/>
    <property type="project" value="InterPro"/>
</dbReference>
<dbReference type="GO" id="GO:0052324">
    <property type="term" value="P:plant-type cell wall cellulose biosynthetic process"/>
    <property type="evidence" value="ECO:0000318"/>
    <property type="project" value="GO_Central"/>
</dbReference>
<dbReference type="InterPro" id="IPR056900">
    <property type="entry name" value="COB_C"/>
</dbReference>
<dbReference type="InterPro" id="IPR006918">
    <property type="entry name" value="COBRA_pln"/>
</dbReference>
<dbReference type="PANTHER" id="PTHR31673:SF3">
    <property type="entry name" value="COBRA-LIKE PROTEIN 4"/>
    <property type="match status" value="1"/>
</dbReference>
<dbReference type="PANTHER" id="PTHR31673">
    <property type="entry name" value="PROTEIN COBRA"/>
    <property type="match status" value="1"/>
</dbReference>
<dbReference type="Pfam" id="PF25079">
    <property type="entry name" value="COB_C"/>
    <property type="match status" value="1"/>
</dbReference>
<dbReference type="Pfam" id="PF04833">
    <property type="entry name" value="COBRA"/>
    <property type="match status" value="1"/>
</dbReference>
<dbReference type="PIRSF" id="PIRSF038122">
    <property type="entry name" value="COBRA"/>
    <property type="match status" value="1"/>
</dbReference>
<proteinExistence type="evidence at transcript level"/>
<feature type="signal peptide" evidence="2">
    <location>
        <begin position="1"/>
        <end position="35"/>
    </location>
</feature>
<feature type="chain" id="PRO_0000247632" description="COBRA-like protein 3">
    <location>
        <begin position="36"/>
        <end position="430"/>
    </location>
</feature>
<feature type="propeptide" id="PRO_0000247633" description="Removed in mature form" evidence="2">
    <location>
        <begin position="431"/>
        <end position="457"/>
    </location>
</feature>
<feature type="transmembrane region" description="Helical" evidence="2">
    <location>
        <begin position="437"/>
        <end position="457"/>
    </location>
</feature>
<feature type="lipid moiety-binding region" description="GPI-anchor amidated asparagine" evidence="2">
    <location>
        <position position="430"/>
    </location>
</feature>
<feature type="glycosylation site" description="N-linked (GlcNAc...) asparagine" evidence="2">
    <location>
        <position position="45"/>
    </location>
</feature>
<feature type="glycosylation site" description="N-linked (GlcNAc...) asparagine" evidence="2">
    <location>
        <position position="170"/>
    </location>
</feature>
<feature type="glycosylation site" description="N-linked (GlcNAc...) asparagine" evidence="2">
    <location>
        <position position="178"/>
    </location>
</feature>
<feature type="glycosylation site" description="N-linked (GlcNAc...) asparagine" evidence="2">
    <location>
        <position position="217"/>
    </location>
</feature>
<feature type="glycosylation site" description="N-linked (GlcNAc...) asparagine" evidence="2">
    <location>
        <position position="242"/>
    </location>
</feature>
<feature type="glycosylation site" description="N-linked (GlcNAc...) asparagine" evidence="2">
    <location>
        <position position="258"/>
    </location>
</feature>
<feature type="glycosylation site" description="N-linked (GlcNAc...) asparagine" evidence="2">
    <location>
        <position position="326"/>
    </location>
</feature>
<feature type="glycosylation site" description="N-linked (GlcNAc...) asparagine" evidence="2">
    <location>
        <position position="341"/>
    </location>
</feature>
<feature type="glycosylation site" description="N-linked (GlcNAc...) asparagine" evidence="2">
    <location>
        <position position="361"/>
    </location>
</feature>
<feature type="sequence conflict" description="In Ref. 5; AK070472." evidence="3" ref="5">
    <original>N</original>
    <variation>D</variation>
    <location>
        <position position="384"/>
    </location>
</feature>
<keyword id="KW-1003">Cell membrane</keyword>
<keyword id="KW-0325">Glycoprotein</keyword>
<keyword id="KW-0336">GPI-anchor</keyword>
<keyword id="KW-0449">Lipoprotein</keyword>
<keyword id="KW-0472">Membrane</keyword>
<keyword id="KW-1185">Reference proteome</keyword>
<keyword id="KW-0732">Signal</keyword>
<keyword id="KW-0812">Transmembrane</keyword>
<keyword id="KW-1133">Transmembrane helix</keyword>